<accession>B2JIH4</accession>
<sequence length="1368" mass="153039">MQYSFTEKKRIRKSFAKRPIVHQVPFLLATQLESFSTFLQAEVPTAQRKPEGLQAAFTSVFPIVSHNGFARLEFVSYMLSPPAFNIKECQQRGLTYCSALRAKVRLVLLDKESPSKPVVKEVKEQEVYMGEIPLMTPTGSFVINGTERVIVSQLHRSPGVFFEHDKGKTHSSGKLLFSARIIPYRGSWLDFEFDPKDVLYFRVDRRRKMPVTILLKAIGLTPEQILANFFVFDNFTLMPEGAQMEFVPERLRGEVARFDITDRDGKVIVQKDKRINAKHIRDLENAKTKYISVPEDYLLGRVLAKNVVDGDTGEVIANANDEVTESVLDKLREAKIKDIQTLYTNDLDQGPYISSTLRIDETADKMAARIAIYRMMRPGEPPTEEAVEALFNRLFYSEEAYDLSKVGRMKFNRRVGRDEIVGPMTLQDDDILATIKILVELRNGKGEVDDIDHLGNRRVRCVGELAENQFRAGLVRVERAVKERLGQAESENLMPHDLINSKPISSAIREFFGSSQLSQFMDQTNPLSEITHKRRVSALGPGGLTRERAGFEVRDVHPTHYGRVCPIETPEGPNIGLINSLALYAHLNEYGFLETPYRKVTDGKVTDQIDYLSAIEEGRYVIAQANAAVAEDGTLTDELVSSREAGETLMVTPDRIQYMDVAPSQIVSVAASLIPFLEHDDANRALMGSNMQRQAVPCLRPEKPVVGTGIERTVAVDSGTTVQALRGGVVDYVDAGRIVIRVNDDEAVAGDVGVDIYNLIKYTRSNQNTNINQRPIAKVGDKVARGDVLADGASTDLGELALGQNMLVAFMPWNGYNFEDSILISEKVVADDRYTSIHIEELNVVARDTKLGPEEITRDISNLAEVQLGRLDESGIVYIGAEVEAGDVLVGKVTPKGETQLTPEEKLLRAIFGEKASDVKDTSLRVPSGMSGTVIDVQVFTREGIQRDKRAQQIIDDELKRYRLDLNDQLRIVEGDAFQRLARMLEGKVANGGPKKLAKGTKIERAYLEDLDHYHWFDIRLADEEAAAQLEAIKDSIEQKRHQFDLAFEEKRKKLTQGDELPPGVLKMVKVYLAVKRRLQPGDKMAGRHGNKGVVSKIVPIEDMPYMADGRPADVVLNPLGVPSRMNVGQVLEVHLGWAAKGLGWRIGEMLQRQARIEEVRAFLTKIYNESGRAEELESFSDDEILELAKNLREGVPFATPVFDGATEEEMSSMLDLAFPDDIAQNLGMTKSKNQVRLYDGRTGEAFERTVTVGYMHYLKLHHLVDDKMHARSTGPYSLVTQQPLGGKAQFGGQRFGEMEVWALEAYGASYVLQEMLTVKSDDVTGRTKVYENLVKGDHVIDAGMPESFNVLVKEIRSLGIDIDLDRN</sequence>
<reference key="1">
    <citation type="journal article" date="2014" name="Stand. Genomic Sci.">
        <title>Complete genome sequence of Burkholderia phymatum STM815(T), a broad host range and efficient nitrogen-fixing symbiont of Mimosa species.</title>
        <authorList>
            <person name="Moulin L."/>
            <person name="Klonowska A."/>
            <person name="Caroline B."/>
            <person name="Booth K."/>
            <person name="Vriezen J.A."/>
            <person name="Melkonian R."/>
            <person name="James E.K."/>
            <person name="Young J.P."/>
            <person name="Bena G."/>
            <person name="Hauser L."/>
            <person name="Land M."/>
            <person name="Kyrpides N."/>
            <person name="Bruce D."/>
            <person name="Chain P."/>
            <person name="Copeland A."/>
            <person name="Pitluck S."/>
            <person name="Woyke T."/>
            <person name="Lizotte-Waniewski M."/>
            <person name="Bristow J."/>
            <person name="Riley M."/>
        </authorList>
    </citation>
    <scope>NUCLEOTIDE SEQUENCE [LARGE SCALE GENOMIC DNA]</scope>
    <source>
        <strain>DSM 17167 / CIP 108236 / LMG 21445 / STM815</strain>
    </source>
</reference>
<dbReference type="EC" id="2.7.7.6" evidence="1"/>
<dbReference type="EMBL" id="CP001043">
    <property type="protein sequence ID" value="ACC72020.1"/>
    <property type="molecule type" value="Genomic_DNA"/>
</dbReference>
<dbReference type="RefSeq" id="WP_012402201.1">
    <property type="nucleotide sequence ID" value="NC_010622.1"/>
</dbReference>
<dbReference type="SMR" id="B2JIH4"/>
<dbReference type="STRING" id="391038.Bphy_2848"/>
<dbReference type="KEGG" id="bph:Bphy_2848"/>
<dbReference type="eggNOG" id="COG0085">
    <property type="taxonomic scope" value="Bacteria"/>
</dbReference>
<dbReference type="HOGENOM" id="CLU_000524_4_0_4"/>
<dbReference type="OrthoDB" id="9803954at2"/>
<dbReference type="Proteomes" id="UP000001192">
    <property type="component" value="Chromosome 1"/>
</dbReference>
<dbReference type="GO" id="GO:0000428">
    <property type="term" value="C:DNA-directed RNA polymerase complex"/>
    <property type="evidence" value="ECO:0007669"/>
    <property type="project" value="UniProtKB-KW"/>
</dbReference>
<dbReference type="GO" id="GO:0003677">
    <property type="term" value="F:DNA binding"/>
    <property type="evidence" value="ECO:0007669"/>
    <property type="project" value="UniProtKB-UniRule"/>
</dbReference>
<dbReference type="GO" id="GO:0003899">
    <property type="term" value="F:DNA-directed RNA polymerase activity"/>
    <property type="evidence" value="ECO:0007669"/>
    <property type="project" value="UniProtKB-UniRule"/>
</dbReference>
<dbReference type="GO" id="GO:0032549">
    <property type="term" value="F:ribonucleoside binding"/>
    <property type="evidence" value="ECO:0007669"/>
    <property type="project" value="InterPro"/>
</dbReference>
<dbReference type="GO" id="GO:0006351">
    <property type="term" value="P:DNA-templated transcription"/>
    <property type="evidence" value="ECO:0007669"/>
    <property type="project" value="UniProtKB-UniRule"/>
</dbReference>
<dbReference type="CDD" id="cd00653">
    <property type="entry name" value="RNA_pol_B_RPB2"/>
    <property type="match status" value="1"/>
</dbReference>
<dbReference type="FunFam" id="2.40.50.100:FF:000006">
    <property type="entry name" value="DNA-directed RNA polymerase subunit beta"/>
    <property type="match status" value="1"/>
</dbReference>
<dbReference type="FunFam" id="2.40.50.150:FF:000001">
    <property type="entry name" value="DNA-directed RNA polymerase subunit beta"/>
    <property type="match status" value="1"/>
</dbReference>
<dbReference type="FunFam" id="3.90.1800.10:FF:000001">
    <property type="entry name" value="DNA-directed RNA polymerase subunit beta"/>
    <property type="match status" value="1"/>
</dbReference>
<dbReference type="Gene3D" id="2.40.50.100">
    <property type="match status" value="1"/>
</dbReference>
<dbReference type="Gene3D" id="2.40.50.150">
    <property type="match status" value="1"/>
</dbReference>
<dbReference type="Gene3D" id="3.90.1100.10">
    <property type="match status" value="2"/>
</dbReference>
<dbReference type="Gene3D" id="2.30.150.10">
    <property type="entry name" value="DNA-directed RNA polymerase, beta subunit, external 1 domain"/>
    <property type="match status" value="1"/>
</dbReference>
<dbReference type="Gene3D" id="2.40.270.10">
    <property type="entry name" value="DNA-directed RNA polymerase, subunit 2, domain 6"/>
    <property type="match status" value="2"/>
</dbReference>
<dbReference type="Gene3D" id="3.90.1800.10">
    <property type="entry name" value="RNA polymerase alpha subunit dimerisation domain"/>
    <property type="match status" value="1"/>
</dbReference>
<dbReference type="Gene3D" id="3.90.1110.10">
    <property type="entry name" value="RNA polymerase Rpb2, domain 2"/>
    <property type="match status" value="2"/>
</dbReference>
<dbReference type="HAMAP" id="MF_01321">
    <property type="entry name" value="RNApol_bact_RpoB"/>
    <property type="match status" value="1"/>
</dbReference>
<dbReference type="InterPro" id="IPR042107">
    <property type="entry name" value="DNA-dir_RNA_pol_bsu_ext_1_sf"/>
</dbReference>
<dbReference type="InterPro" id="IPR019462">
    <property type="entry name" value="DNA-dir_RNA_pol_bsu_external_1"/>
</dbReference>
<dbReference type="InterPro" id="IPR015712">
    <property type="entry name" value="DNA-dir_RNA_pol_su2"/>
</dbReference>
<dbReference type="InterPro" id="IPR007120">
    <property type="entry name" value="DNA-dir_RNAP_su2_dom"/>
</dbReference>
<dbReference type="InterPro" id="IPR037033">
    <property type="entry name" value="DNA-dir_RNAP_su2_hyb_sf"/>
</dbReference>
<dbReference type="InterPro" id="IPR010243">
    <property type="entry name" value="RNA_pol_bsu_bac"/>
</dbReference>
<dbReference type="InterPro" id="IPR007121">
    <property type="entry name" value="RNA_pol_bsu_CS"/>
</dbReference>
<dbReference type="InterPro" id="IPR007644">
    <property type="entry name" value="RNA_pol_bsu_protrusion"/>
</dbReference>
<dbReference type="InterPro" id="IPR007642">
    <property type="entry name" value="RNA_pol_Rpb2_2"/>
</dbReference>
<dbReference type="InterPro" id="IPR037034">
    <property type="entry name" value="RNA_pol_Rpb2_2_sf"/>
</dbReference>
<dbReference type="InterPro" id="IPR007645">
    <property type="entry name" value="RNA_pol_Rpb2_3"/>
</dbReference>
<dbReference type="InterPro" id="IPR007641">
    <property type="entry name" value="RNA_pol_Rpb2_7"/>
</dbReference>
<dbReference type="InterPro" id="IPR014724">
    <property type="entry name" value="RNA_pol_RPB2_OB-fold"/>
</dbReference>
<dbReference type="NCBIfam" id="NF001616">
    <property type="entry name" value="PRK00405.1"/>
    <property type="match status" value="1"/>
</dbReference>
<dbReference type="NCBIfam" id="TIGR02013">
    <property type="entry name" value="rpoB"/>
    <property type="match status" value="1"/>
</dbReference>
<dbReference type="PANTHER" id="PTHR20856">
    <property type="entry name" value="DNA-DIRECTED RNA POLYMERASE I SUBUNIT 2"/>
    <property type="match status" value="1"/>
</dbReference>
<dbReference type="Pfam" id="PF04563">
    <property type="entry name" value="RNA_pol_Rpb2_1"/>
    <property type="match status" value="1"/>
</dbReference>
<dbReference type="Pfam" id="PF04561">
    <property type="entry name" value="RNA_pol_Rpb2_2"/>
    <property type="match status" value="2"/>
</dbReference>
<dbReference type="Pfam" id="PF04565">
    <property type="entry name" value="RNA_pol_Rpb2_3"/>
    <property type="match status" value="1"/>
</dbReference>
<dbReference type="Pfam" id="PF10385">
    <property type="entry name" value="RNA_pol_Rpb2_45"/>
    <property type="match status" value="1"/>
</dbReference>
<dbReference type="Pfam" id="PF00562">
    <property type="entry name" value="RNA_pol_Rpb2_6"/>
    <property type="match status" value="1"/>
</dbReference>
<dbReference type="Pfam" id="PF04560">
    <property type="entry name" value="RNA_pol_Rpb2_7"/>
    <property type="match status" value="1"/>
</dbReference>
<dbReference type="SUPFAM" id="SSF64484">
    <property type="entry name" value="beta and beta-prime subunits of DNA dependent RNA-polymerase"/>
    <property type="match status" value="1"/>
</dbReference>
<dbReference type="PROSITE" id="PS01166">
    <property type="entry name" value="RNA_POL_BETA"/>
    <property type="match status" value="1"/>
</dbReference>
<proteinExistence type="inferred from homology"/>
<evidence type="ECO:0000255" key="1">
    <source>
        <dbReference type="HAMAP-Rule" id="MF_01321"/>
    </source>
</evidence>
<protein>
    <recommendedName>
        <fullName evidence="1">DNA-directed RNA polymerase subunit beta</fullName>
        <shortName evidence="1">RNAP subunit beta</shortName>
        <ecNumber evidence="1">2.7.7.6</ecNumber>
    </recommendedName>
    <alternativeName>
        <fullName evidence="1">RNA polymerase subunit beta</fullName>
    </alternativeName>
    <alternativeName>
        <fullName evidence="1">Transcriptase subunit beta</fullName>
    </alternativeName>
</protein>
<feature type="chain" id="PRO_1000141672" description="DNA-directed RNA polymerase subunit beta">
    <location>
        <begin position="1"/>
        <end position="1368"/>
    </location>
</feature>
<gene>
    <name evidence="1" type="primary">rpoB</name>
    <name type="ordered locus">Bphy_2848</name>
</gene>
<keyword id="KW-0240">DNA-directed RNA polymerase</keyword>
<keyword id="KW-0548">Nucleotidyltransferase</keyword>
<keyword id="KW-1185">Reference proteome</keyword>
<keyword id="KW-0804">Transcription</keyword>
<keyword id="KW-0808">Transferase</keyword>
<name>RPOB_PARP8</name>
<organism>
    <name type="scientific">Paraburkholderia phymatum (strain DSM 17167 / CIP 108236 / LMG 21445 / STM815)</name>
    <name type="common">Burkholderia phymatum</name>
    <dbReference type="NCBI Taxonomy" id="391038"/>
    <lineage>
        <taxon>Bacteria</taxon>
        <taxon>Pseudomonadati</taxon>
        <taxon>Pseudomonadota</taxon>
        <taxon>Betaproteobacteria</taxon>
        <taxon>Burkholderiales</taxon>
        <taxon>Burkholderiaceae</taxon>
        <taxon>Paraburkholderia</taxon>
    </lineage>
</organism>
<comment type="function">
    <text evidence="1">DNA-dependent RNA polymerase catalyzes the transcription of DNA into RNA using the four ribonucleoside triphosphates as substrates.</text>
</comment>
<comment type="catalytic activity">
    <reaction evidence="1">
        <text>RNA(n) + a ribonucleoside 5'-triphosphate = RNA(n+1) + diphosphate</text>
        <dbReference type="Rhea" id="RHEA:21248"/>
        <dbReference type="Rhea" id="RHEA-COMP:14527"/>
        <dbReference type="Rhea" id="RHEA-COMP:17342"/>
        <dbReference type="ChEBI" id="CHEBI:33019"/>
        <dbReference type="ChEBI" id="CHEBI:61557"/>
        <dbReference type="ChEBI" id="CHEBI:140395"/>
        <dbReference type="EC" id="2.7.7.6"/>
    </reaction>
</comment>
<comment type="subunit">
    <text evidence="1">The RNAP catalytic core consists of 2 alpha, 1 beta, 1 beta' and 1 omega subunit. When a sigma factor is associated with the core the holoenzyme is formed, which can initiate transcription.</text>
</comment>
<comment type="similarity">
    <text evidence="1">Belongs to the RNA polymerase beta chain family.</text>
</comment>